<dbReference type="EC" id="6.3.2.6" evidence="1"/>
<dbReference type="EMBL" id="CP001598">
    <property type="protein sequence ID" value="ACQ47504.1"/>
    <property type="molecule type" value="Genomic_DNA"/>
</dbReference>
<dbReference type="RefSeq" id="WP_001170540.1">
    <property type="nucleotide sequence ID" value="NC_012659.1"/>
</dbReference>
<dbReference type="SMR" id="C3PBM7"/>
<dbReference type="GeneID" id="45020350"/>
<dbReference type="KEGG" id="bai:BAA_0346"/>
<dbReference type="HOGENOM" id="CLU_061495_2_0_9"/>
<dbReference type="UniPathway" id="UPA00074">
    <property type="reaction ID" value="UER00131"/>
</dbReference>
<dbReference type="GO" id="GO:0005524">
    <property type="term" value="F:ATP binding"/>
    <property type="evidence" value="ECO:0007669"/>
    <property type="project" value="UniProtKB-KW"/>
</dbReference>
<dbReference type="GO" id="GO:0004639">
    <property type="term" value="F:phosphoribosylaminoimidazolesuccinocarboxamide synthase activity"/>
    <property type="evidence" value="ECO:0007669"/>
    <property type="project" value="UniProtKB-UniRule"/>
</dbReference>
<dbReference type="GO" id="GO:0006189">
    <property type="term" value="P:'de novo' IMP biosynthetic process"/>
    <property type="evidence" value="ECO:0007669"/>
    <property type="project" value="UniProtKB-UniRule"/>
</dbReference>
<dbReference type="GO" id="GO:0009236">
    <property type="term" value="P:cobalamin biosynthetic process"/>
    <property type="evidence" value="ECO:0007669"/>
    <property type="project" value="InterPro"/>
</dbReference>
<dbReference type="CDD" id="cd01415">
    <property type="entry name" value="SAICAR_synt_PurC"/>
    <property type="match status" value="1"/>
</dbReference>
<dbReference type="FunFam" id="3.30.200.20:FF:000189">
    <property type="entry name" value="Phosphoribosylaminoimidazole-succinocarboxamide synthase"/>
    <property type="match status" value="1"/>
</dbReference>
<dbReference type="FunFam" id="3.30.470.20:FF:000006">
    <property type="entry name" value="Phosphoribosylaminoimidazole-succinocarboxamide synthase"/>
    <property type="match status" value="1"/>
</dbReference>
<dbReference type="Gene3D" id="3.30.470.20">
    <property type="entry name" value="ATP-grasp fold, B domain"/>
    <property type="match status" value="1"/>
</dbReference>
<dbReference type="Gene3D" id="3.30.200.20">
    <property type="entry name" value="Phosphorylase Kinase, domain 1"/>
    <property type="match status" value="1"/>
</dbReference>
<dbReference type="HAMAP" id="MF_00137">
    <property type="entry name" value="SAICAR_synth"/>
    <property type="match status" value="1"/>
</dbReference>
<dbReference type="InterPro" id="IPR028923">
    <property type="entry name" value="SAICAR_synt/ADE2_N"/>
</dbReference>
<dbReference type="InterPro" id="IPR033934">
    <property type="entry name" value="SAICAR_synt_PurC"/>
</dbReference>
<dbReference type="InterPro" id="IPR001636">
    <property type="entry name" value="SAICAR_synth"/>
</dbReference>
<dbReference type="InterPro" id="IPR050089">
    <property type="entry name" value="SAICAR_synthetase"/>
</dbReference>
<dbReference type="InterPro" id="IPR018236">
    <property type="entry name" value="SAICAR_synthetase_CS"/>
</dbReference>
<dbReference type="NCBIfam" id="TIGR00081">
    <property type="entry name" value="purC"/>
    <property type="match status" value="1"/>
</dbReference>
<dbReference type="PANTHER" id="PTHR43599">
    <property type="entry name" value="MULTIFUNCTIONAL PROTEIN ADE2"/>
    <property type="match status" value="1"/>
</dbReference>
<dbReference type="PANTHER" id="PTHR43599:SF3">
    <property type="entry name" value="SI:DKEY-6E2.2"/>
    <property type="match status" value="1"/>
</dbReference>
<dbReference type="Pfam" id="PF01259">
    <property type="entry name" value="SAICAR_synt"/>
    <property type="match status" value="1"/>
</dbReference>
<dbReference type="SUPFAM" id="SSF56104">
    <property type="entry name" value="SAICAR synthase-like"/>
    <property type="match status" value="1"/>
</dbReference>
<dbReference type="PROSITE" id="PS01057">
    <property type="entry name" value="SAICAR_SYNTHETASE_1"/>
    <property type="match status" value="1"/>
</dbReference>
<dbReference type="PROSITE" id="PS01058">
    <property type="entry name" value="SAICAR_SYNTHETASE_2"/>
    <property type="match status" value="1"/>
</dbReference>
<reference key="1">
    <citation type="submission" date="2009-04" db="EMBL/GenBank/DDBJ databases">
        <title>Genome sequence of Bacillus anthracis A0248.</title>
        <authorList>
            <person name="Dodson R.J."/>
            <person name="Munk A.C."/>
            <person name="Bruce D."/>
            <person name="Detter C."/>
            <person name="Tapia R."/>
            <person name="Sutton G."/>
            <person name="Sims D."/>
            <person name="Brettin T."/>
        </authorList>
    </citation>
    <scope>NUCLEOTIDE SEQUENCE [LARGE SCALE GENOMIC DNA]</scope>
    <source>
        <strain>A0248</strain>
    </source>
</reference>
<proteinExistence type="inferred from homology"/>
<gene>
    <name evidence="1" type="primary">purC</name>
    <name type="ordered locus">BAA_0346</name>
</gene>
<organism>
    <name type="scientific">Bacillus anthracis (strain A0248)</name>
    <dbReference type="NCBI Taxonomy" id="592021"/>
    <lineage>
        <taxon>Bacteria</taxon>
        <taxon>Bacillati</taxon>
        <taxon>Bacillota</taxon>
        <taxon>Bacilli</taxon>
        <taxon>Bacillales</taxon>
        <taxon>Bacillaceae</taxon>
        <taxon>Bacillus</taxon>
        <taxon>Bacillus cereus group</taxon>
    </lineage>
</organism>
<name>PUR7_BACAA</name>
<comment type="catalytic activity">
    <reaction evidence="1">
        <text>5-amino-1-(5-phospho-D-ribosyl)imidazole-4-carboxylate + L-aspartate + ATP = (2S)-2-[5-amino-1-(5-phospho-beta-D-ribosyl)imidazole-4-carboxamido]succinate + ADP + phosphate + 2 H(+)</text>
        <dbReference type="Rhea" id="RHEA:22628"/>
        <dbReference type="ChEBI" id="CHEBI:15378"/>
        <dbReference type="ChEBI" id="CHEBI:29991"/>
        <dbReference type="ChEBI" id="CHEBI:30616"/>
        <dbReference type="ChEBI" id="CHEBI:43474"/>
        <dbReference type="ChEBI" id="CHEBI:58443"/>
        <dbReference type="ChEBI" id="CHEBI:77657"/>
        <dbReference type="ChEBI" id="CHEBI:456216"/>
        <dbReference type="EC" id="6.3.2.6"/>
    </reaction>
</comment>
<comment type="pathway">
    <text evidence="1">Purine metabolism; IMP biosynthesis via de novo pathway; 5-amino-1-(5-phospho-D-ribosyl)imidazole-4-carboxamide from 5-amino-1-(5-phospho-D-ribosyl)imidazole-4-carboxylate: step 1/2.</text>
</comment>
<comment type="similarity">
    <text evidence="1">Belongs to the SAICAR synthetase family.</text>
</comment>
<sequence length="239" mass="27178">MQKLELLYEGKAKRIYRTESADMVWVEYKDSATAFNGEKKETITGKGRLNNEITTLLFRKLQEVGIKTHFVEKLSETEQLVKKVSIIPLEVVTRNVIAGSLSKRLGMEEGTVLAEPIVEFYFKDDDLGDPLVTEDHIRVLNVASPEQVSVLRDMALQINQVLIDHFASCRVRLVDFKLEFGVTDEGAIILADEISPDTCRLWDETSNEKFDKDVFRRDLGNLTDAYEEILKRLGGISHV</sequence>
<feature type="chain" id="PRO_1000122899" description="Phosphoribosylaminoimidazole-succinocarboxamide synthase">
    <location>
        <begin position="1"/>
        <end position="239"/>
    </location>
</feature>
<accession>C3PBM7</accession>
<protein>
    <recommendedName>
        <fullName evidence="1">Phosphoribosylaminoimidazole-succinocarboxamide synthase</fullName>
        <ecNumber evidence="1">6.3.2.6</ecNumber>
    </recommendedName>
    <alternativeName>
        <fullName evidence="1">SAICAR synthetase</fullName>
    </alternativeName>
</protein>
<keyword id="KW-0067">ATP-binding</keyword>
<keyword id="KW-0436">Ligase</keyword>
<keyword id="KW-0547">Nucleotide-binding</keyword>
<keyword id="KW-0658">Purine biosynthesis</keyword>
<evidence type="ECO:0000255" key="1">
    <source>
        <dbReference type="HAMAP-Rule" id="MF_00137"/>
    </source>
</evidence>